<organism>
    <name type="scientific">Bartonella quintana (strain Toulouse)</name>
    <name type="common">Rochalimaea quintana</name>
    <dbReference type="NCBI Taxonomy" id="283165"/>
    <lineage>
        <taxon>Bacteria</taxon>
        <taxon>Pseudomonadati</taxon>
        <taxon>Pseudomonadota</taxon>
        <taxon>Alphaproteobacteria</taxon>
        <taxon>Hyphomicrobiales</taxon>
        <taxon>Bartonellaceae</taxon>
        <taxon>Bartonella</taxon>
    </lineage>
</organism>
<keyword id="KW-0143">Chaperone</keyword>
<keyword id="KW-0963">Cytoplasm</keyword>
<keyword id="KW-0235">DNA replication</keyword>
<keyword id="KW-0479">Metal-binding</keyword>
<keyword id="KW-0677">Repeat</keyword>
<keyword id="KW-0346">Stress response</keyword>
<keyword id="KW-0862">Zinc</keyword>
<keyword id="KW-0863">Zinc-finger</keyword>
<dbReference type="EMBL" id="BX897700">
    <property type="protein sequence ID" value="CAF25567.1"/>
    <property type="molecule type" value="Genomic_DNA"/>
</dbReference>
<dbReference type="RefSeq" id="WP_011178895.1">
    <property type="nucleotide sequence ID" value="NC_005955.1"/>
</dbReference>
<dbReference type="SMR" id="Q6G1F8"/>
<dbReference type="GeneID" id="56532451"/>
<dbReference type="KEGG" id="bqu:BQ00600"/>
<dbReference type="eggNOG" id="COG0484">
    <property type="taxonomic scope" value="Bacteria"/>
</dbReference>
<dbReference type="HOGENOM" id="CLU_017633_0_7_5"/>
<dbReference type="OrthoDB" id="9779889at2"/>
<dbReference type="Proteomes" id="UP000000597">
    <property type="component" value="Chromosome"/>
</dbReference>
<dbReference type="GO" id="GO:0005737">
    <property type="term" value="C:cytoplasm"/>
    <property type="evidence" value="ECO:0007669"/>
    <property type="project" value="UniProtKB-SubCell"/>
</dbReference>
<dbReference type="GO" id="GO:0005524">
    <property type="term" value="F:ATP binding"/>
    <property type="evidence" value="ECO:0007669"/>
    <property type="project" value="InterPro"/>
</dbReference>
<dbReference type="GO" id="GO:0031072">
    <property type="term" value="F:heat shock protein binding"/>
    <property type="evidence" value="ECO:0007669"/>
    <property type="project" value="InterPro"/>
</dbReference>
<dbReference type="GO" id="GO:0051082">
    <property type="term" value="F:unfolded protein binding"/>
    <property type="evidence" value="ECO:0007669"/>
    <property type="project" value="UniProtKB-UniRule"/>
</dbReference>
<dbReference type="GO" id="GO:0008270">
    <property type="term" value="F:zinc ion binding"/>
    <property type="evidence" value="ECO:0007669"/>
    <property type="project" value="UniProtKB-UniRule"/>
</dbReference>
<dbReference type="GO" id="GO:0051085">
    <property type="term" value="P:chaperone cofactor-dependent protein refolding"/>
    <property type="evidence" value="ECO:0007669"/>
    <property type="project" value="TreeGrafter"/>
</dbReference>
<dbReference type="GO" id="GO:0006260">
    <property type="term" value="P:DNA replication"/>
    <property type="evidence" value="ECO:0007669"/>
    <property type="project" value="UniProtKB-KW"/>
</dbReference>
<dbReference type="GO" id="GO:0042026">
    <property type="term" value="P:protein refolding"/>
    <property type="evidence" value="ECO:0007669"/>
    <property type="project" value="TreeGrafter"/>
</dbReference>
<dbReference type="GO" id="GO:0009408">
    <property type="term" value="P:response to heat"/>
    <property type="evidence" value="ECO:0007669"/>
    <property type="project" value="InterPro"/>
</dbReference>
<dbReference type="CDD" id="cd06257">
    <property type="entry name" value="DnaJ"/>
    <property type="match status" value="1"/>
</dbReference>
<dbReference type="CDD" id="cd10747">
    <property type="entry name" value="DnaJ_C"/>
    <property type="match status" value="1"/>
</dbReference>
<dbReference type="CDD" id="cd10719">
    <property type="entry name" value="DnaJ_zf"/>
    <property type="match status" value="1"/>
</dbReference>
<dbReference type="FunFam" id="1.10.287.110:FF:000034">
    <property type="entry name" value="Chaperone protein DnaJ"/>
    <property type="match status" value="1"/>
</dbReference>
<dbReference type="FunFam" id="2.10.230.10:FF:000002">
    <property type="entry name" value="Molecular chaperone DnaJ"/>
    <property type="match status" value="1"/>
</dbReference>
<dbReference type="FunFam" id="2.60.260.20:FF:000004">
    <property type="entry name" value="Molecular chaperone DnaJ"/>
    <property type="match status" value="1"/>
</dbReference>
<dbReference type="Gene3D" id="1.10.287.110">
    <property type="entry name" value="DnaJ domain"/>
    <property type="match status" value="1"/>
</dbReference>
<dbReference type="Gene3D" id="2.10.230.10">
    <property type="entry name" value="Heat shock protein DnaJ, cysteine-rich domain"/>
    <property type="match status" value="1"/>
</dbReference>
<dbReference type="Gene3D" id="2.60.260.20">
    <property type="entry name" value="Urease metallochaperone UreE, N-terminal domain"/>
    <property type="match status" value="2"/>
</dbReference>
<dbReference type="HAMAP" id="MF_01152">
    <property type="entry name" value="DnaJ"/>
    <property type="match status" value="1"/>
</dbReference>
<dbReference type="InterPro" id="IPR012724">
    <property type="entry name" value="DnaJ"/>
</dbReference>
<dbReference type="InterPro" id="IPR002939">
    <property type="entry name" value="DnaJ_C"/>
</dbReference>
<dbReference type="InterPro" id="IPR001623">
    <property type="entry name" value="DnaJ_domain"/>
</dbReference>
<dbReference type="InterPro" id="IPR018253">
    <property type="entry name" value="DnaJ_domain_CS"/>
</dbReference>
<dbReference type="InterPro" id="IPR008971">
    <property type="entry name" value="HSP40/DnaJ_pept-bd"/>
</dbReference>
<dbReference type="InterPro" id="IPR001305">
    <property type="entry name" value="HSP_DnaJ_Cys-rich_dom"/>
</dbReference>
<dbReference type="InterPro" id="IPR036410">
    <property type="entry name" value="HSP_DnaJ_Cys-rich_dom_sf"/>
</dbReference>
<dbReference type="InterPro" id="IPR036869">
    <property type="entry name" value="J_dom_sf"/>
</dbReference>
<dbReference type="NCBIfam" id="TIGR02349">
    <property type="entry name" value="DnaJ_bact"/>
    <property type="match status" value="1"/>
</dbReference>
<dbReference type="NCBIfam" id="NF008035">
    <property type="entry name" value="PRK10767.1"/>
    <property type="match status" value="1"/>
</dbReference>
<dbReference type="PANTHER" id="PTHR43096:SF48">
    <property type="entry name" value="CHAPERONE PROTEIN DNAJ"/>
    <property type="match status" value="1"/>
</dbReference>
<dbReference type="PANTHER" id="PTHR43096">
    <property type="entry name" value="DNAJ HOMOLOG 1, MITOCHONDRIAL-RELATED"/>
    <property type="match status" value="1"/>
</dbReference>
<dbReference type="Pfam" id="PF00226">
    <property type="entry name" value="DnaJ"/>
    <property type="match status" value="1"/>
</dbReference>
<dbReference type="Pfam" id="PF01556">
    <property type="entry name" value="DnaJ_C"/>
    <property type="match status" value="1"/>
</dbReference>
<dbReference type="Pfam" id="PF00684">
    <property type="entry name" value="DnaJ_CXXCXGXG"/>
    <property type="match status" value="1"/>
</dbReference>
<dbReference type="PRINTS" id="PR00625">
    <property type="entry name" value="JDOMAIN"/>
</dbReference>
<dbReference type="SMART" id="SM00271">
    <property type="entry name" value="DnaJ"/>
    <property type="match status" value="1"/>
</dbReference>
<dbReference type="SUPFAM" id="SSF46565">
    <property type="entry name" value="Chaperone J-domain"/>
    <property type="match status" value="1"/>
</dbReference>
<dbReference type="SUPFAM" id="SSF57938">
    <property type="entry name" value="DnaJ/Hsp40 cysteine-rich domain"/>
    <property type="match status" value="1"/>
</dbReference>
<dbReference type="SUPFAM" id="SSF49493">
    <property type="entry name" value="HSP40/DnaJ peptide-binding domain"/>
    <property type="match status" value="2"/>
</dbReference>
<dbReference type="PROSITE" id="PS00636">
    <property type="entry name" value="DNAJ_1"/>
    <property type="match status" value="1"/>
</dbReference>
<dbReference type="PROSITE" id="PS50076">
    <property type="entry name" value="DNAJ_2"/>
    <property type="match status" value="1"/>
</dbReference>
<dbReference type="PROSITE" id="PS51188">
    <property type="entry name" value="ZF_CR"/>
    <property type="match status" value="1"/>
</dbReference>
<sequence>MKVDYYEILGVTRECDDKKLKSAFRKLAMQYHPDRNAGDKEAERRFKEIGEAYEVLKDPQKRAAYDRFGHAAFENNNQGGGNPFGGFAAGGFSDIFEDFFGEIMGGGHRKRSDGRERGADLSYNMEVTLEEAFSGKTAQINIPSSIVCDSCEGSGAKKGSKPQICGTCHGAGRVRAAQGFFSIERTCHACNGRGEVITDPCPKCQGTRRVEKNRSLSVNIPAGIEDGTRIRLSGEGDAGIRGGPNGDLYIFLSVKPHEFFQREGADLHCRIPLSMVTAALGGEFEVSDLDGIKARVKIPEGTQNGRQFRLKGKGMPMLRRQQVRGDLYIHITIETPQKLTQEQRELLQKFEKLSNHENSPQSHGFFSRMKEFFENISGQN</sequence>
<protein>
    <recommendedName>
        <fullName evidence="1">Chaperone protein DnaJ</fullName>
    </recommendedName>
</protein>
<evidence type="ECO:0000255" key="1">
    <source>
        <dbReference type="HAMAP-Rule" id="MF_01152"/>
    </source>
</evidence>
<proteinExistence type="inferred from homology"/>
<name>DNAJ_BARQU</name>
<gene>
    <name evidence="1" type="primary">dnaJ</name>
    <name type="ordered locus">BQ00600</name>
</gene>
<reference key="1">
    <citation type="journal article" date="2004" name="Proc. Natl. Acad. Sci. U.S.A.">
        <title>The louse-borne human pathogen Bartonella quintana is a genomic derivative of the zoonotic agent Bartonella henselae.</title>
        <authorList>
            <person name="Alsmark U.C.M."/>
            <person name="Frank A.C."/>
            <person name="Karlberg E.O."/>
            <person name="Legault B.-A."/>
            <person name="Ardell D.H."/>
            <person name="Canbaeck B."/>
            <person name="Eriksson A.-S."/>
            <person name="Naeslund A.K."/>
            <person name="Handley S.A."/>
            <person name="Huvet M."/>
            <person name="La Scola B."/>
            <person name="Holmberg M."/>
            <person name="Andersson S.G.E."/>
        </authorList>
    </citation>
    <scope>NUCLEOTIDE SEQUENCE [LARGE SCALE GENOMIC DNA]</scope>
    <source>
        <strain>Toulouse</strain>
    </source>
</reference>
<accession>Q6G1F8</accession>
<feature type="chain" id="PRO_0000070731" description="Chaperone protein DnaJ">
    <location>
        <begin position="1"/>
        <end position="380"/>
    </location>
</feature>
<feature type="domain" description="J" evidence="1">
    <location>
        <begin position="4"/>
        <end position="69"/>
    </location>
</feature>
<feature type="repeat" description="CXXCXGXG motif">
    <location>
        <begin position="148"/>
        <end position="155"/>
    </location>
</feature>
<feature type="repeat" description="CXXCXGXG motif">
    <location>
        <begin position="165"/>
        <end position="172"/>
    </location>
</feature>
<feature type="repeat" description="CXXCXGXG motif">
    <location>
        <begin position="187"/>
        <end position="194"/>
    </location>
</feature>
<feature type="repeat" description="CXXCXGXG motif">
    <location>
        <begin position="201"/>
        <end position="208"/>
    </location>
</feature>
<feature type="zinc finger region" description="CR-type" evidence="1">
    <location>
        <begin position="135"/>
        <end position="213"/>
    </location>
</feature>
<feature type="binding site" evidence="1">
    <location>
        <position position="148"/>
    </location>
    <ligand>
        <name>Zn(2+)</name>
        <dbReference type="ChEBI" id="CHEBI:29105"/>
        <label>1</label>
    </ligand>
</feature>
<feature type="binding site" evidence="1">
    <location>
        <position position="151"/>
    </location>
    <ligand>
        <name>Zn(2+)</name>
        <dbReference type="ChEBI" id="CHEBI:29105"/>
        <label>1</label>
    </ligand>
</feature>
<feature type="binding site" evidence="1">
    <location>
        <position position="165"/>
    </location>
    <ligand>
        <name>Zn(2+)</name>
        <dbReference type="ChEBI" id="CHEBI:29105"/>
        <label>2</label>
    </ligand>
</feature>
<feature type="binding site" evidence="1">
    <location>
        <position position="168"/>
    </location>
    <ligand>
        <name>Zn(2+)</name>
        <dbReference type="ChEBI" id="CHEBI:29105"/>
        <label>2</label>
    </ligand>
</feature>
<feature type="binding site" evidence="1">
    <location>
        <position position="187"/>
    </location>
    <ligand>
        <name>Zn(2+)</name>
        <dbReference type="ChEBI" id="CHEBI:29105"/>
        <label>2</label>
    </ligand>
</feature>
<feature type="binding site" evidence="1">
    <location>
        <position position="190"/>
    </location>
    <ligand>
        <name>Zn(2+)</name>
        <dbReference type="ChEBI" id="CHEBI:29105"/>
        <label>2</label>
    </ligand>
</feature>
<feature type="binding site" evidence="1">
    <location>
        <position position="201"/>
    </location>
    <ligand>
        <name>Zn(2+)</name>
        <dbReference type="ChEBI" id="CHEBI:29105"/>
        <label>1</label>
    </ligand>
</feature>
<feature type="binding site" evidence="1">
    <location>
        <position position="204"/>
    </location>
    <ligand>
        <name>Zn(2+)</name>
        <dbReference type="ChEBI" id="CHEBI:29105"/>
        <label>1</label>
    </ligand>
</feature>
<comment type="function">
    <text evidence="1">Participates actively in the response to hyperosmotic and heat shock by preventing the aggregation of stress-denatured proteins and by disaggregating proteins, also in an autonomous, DnaK-independent fashion. Unfolded proteins bind initially to DnaJ; upon interaction with the DnaJ-bound protein, DnaK hydrolyzes its bound ATP, resulting in the formation of a stable complex. GrpE releases ADP from DnaK; ATP binding to DnaK triggers the release of the substrate protein, thus completing the reaction cycle. Several rounds of ATP-dependent interactions between DnaJ, DnaK and GrpE are required for fully efficient folding. Also involved, together with DnaK and GrpE, in the DNA replication of plasmids through activation of initiation proteins.</text>
</comment>
<comment type="cofactor">
    <cofactor evidence="1">
        <name>Zn(2+)</name>
        <dbReference type="ChEBI" id="CHEBI:29105"/>
    </cofactor>
    <text evidence="1">Binds 2 Zn(2+) ions per monomer.</text>
</comment>
<comment type="subunit">
    <text evidence="1">Homodimer.</text>
</comment>
<comment type="subcellular location">
    <subcellularLocation>
        <location evidence="1">Cytoplasm</location>
    </subcellularLocation>
</comment>
<comment type="domain">
    <text evidence="1">The J domain is necessary and sufficient to stimulate DnaK ATPase activity. Zinc center 1 plays an important role in the autonomous, DnaK-independent chaperone activity of DnaJ. Zinc center 2 is essential for interaction with DnaK and for DnaJ activity.</text>
</comment>
<comment type="similarity">
    <text evidence="1">Belongs to the DnaJ family.</text>
</comment>